<reference key="1">
    <citation type="journal article" date="1998" name="Science">
        <title>Genome sequence of the nematode C. elegans: a platform for investigating biology.</title>
        <authorList>
            <consortium name="The C. elegans sequencing consortium"/>
        </authorList>
    </citation>
    <scope>NUCLEOTIDE SEQUENCE [LARGE SCALE GENOMIC DNA]</scope>
    <source>
        <strain>Bristol N2</strain>
    </source>
</reference>
<reference evidence="8" key="2">
    <citation type="journal article" date="2000" name="EMBO J.">
        <title>Functional characterization of SR and SR-related genes in Caenorhabditis elegans.</title>
        <authorList>
            <person name="Longman D."/>
            <person name="Johnstone I.L."/>
            <person name="Caceres J.F."/>
        </authorList>
    </citation>
    <scope>IDENTIFICATION</scope>
    <scope>FUNCTION</scope>
</reference>
<reference evidence="8" key="3">
    <citation type="journal article" date="2000" name="Mech. Dev.">
        <title>Unique and redundant functions of SR proteins, a conserved family of splicing factors, in Caenorhabditis elegans development.</title>
        <authorList>
            <person name="Kawano T."/>
            <person name="Fujita M."/>
            <person name="Sakamoto H."/>
        </authorList>
    </citation>
    <scope>FUNCTION</scope>
    <scope>SUBCELLULAR LOCATION</scope>
</reference>
<name>RSP6_CAEEL</name>
<gene>
    <name type="primary">rsp-6</name>
    <name evidence="7" type="synonym">srp-1</name>
    <name type="ORF">C33H5.12</name>
</gene>
<comment type="function">
    <text evidence="5 6">Plays a functionally redundant role in shifting germ cell sexual differentiation in hermaprodites. Required for the development of somatic gonad structures and for progression from larval stage to adulthood.</text>
</comment>
<comment type="subcellular location">
    <subcellularLocation>
        <location evidence="6">Nucleus</location>
    </subcellularLocation>
</comment>
<comment type="PTM">
    <text evidence="1">Extensively phosphorylated on serine residues in the RS domain.</text>
</comment>
<comment type="miscellaneous">
    <text>RNA-mediated interference (RNAi) of rsp-5 and rsp-6 result in fertile animals that exhibit excessive sperm and delayed oocyte production, and sterile animals that develop morphological abnormalities of somatic gonads. Rsp-2/rsp-6 RNAi caused severe abnormalities in somatic gonad structures and in some cases animals were arrested or dead at the larval stage.</text>
</comment>
<comment type="similarity">
    <text evidence="2">Belongs to the splicing factor SR family.</text>
</comment>
<feature type="chain" id="PRO_0000081953" description="Probable splicing factor, arginine/serine-rich 6">
    <location>
        <begin position="1"/>
        <end position="179"/>
    </location>
</feature>
<feature type="domain" description="RRM" evidence="3">
    <location>
        <begin position="3"/>
        <end position="76"/>
    </location>
</feature>
<feature type="region of interest" description="Disordered" evidence="4">
    <location>
        <begin position="75"/>
        <end position="179"/>
    </location>
</feature>
<feature type="compositionally biased region" description="Gly residues" evidence="4">
    <location>
        <begin position="78"/>
        <end position="93"/>
    </location>
</feature>
<feature type="compositionally biased region" description="Basic and acidic residues" evidence="4">
    <location>
        <begin position="94"/>
        <end position="160"/>
    </location>
</feature>
<feature type="compositionally biased region" description="Basic residues" evidence="4">
    <location>
        <begin position="161"/>
        <end position="173"/>
    </location>
</feature>
<protein>
    <recommendedName>
        <fullName>Probable splicing factor, arginine/serine-rich 6</fullName>
    </recommendedName>
    <alternativeName>
        <fullName>CeSRp20</fullName>
    </alternativeName>
    <alternativeName>
        <fullName>RNA-binding protein srp-1</fullName>
    </alternativeName>
</protein>
<organism>
    <name type="scientific">Caenorhabditis elegans</name>
    <dbReference type="NCBI Taxonomy" id="6239"/>
    <lineage>
        <taxon>Eukaryota</taxon>
        <taxon>Metazoa</taxon>
        <taxon>Ecdysozoa</taxon>
        <taxon>Nematoda</taxon>
        <taxon>Chromadorea</taxon>
        <taxon>Rhabditida</taxon>
        <taxon>Rhabditina</taxon>
        <taxon>Rhabditomorpha</taxon>
        <taxon>Rhabditoidea</taxon>
        <taxon>Rhabditidae</taxon>
        <taxon>Peloderinae</taxon>
        <taxon>Caenorhabditis</taxon>
    </lineage>
</organism>
<sequence>MDAKVYVGGLPSDATSQELEEIFDRFGRIRKVWVARRPPGFAFVEYDDVRDAEDAVRALDGSRICGVRARVELSTGQRRGGGGRGGGFGGRGGGGRDRSPYRGDRGRSRSRSRDRGRDRSRDRSRDRSRDRSRDRSRERSRERERTRSRSRSPQERDRSHSKSRSRSRSRSRSRSASPH</sequence>
<accession>Q18409</accession>
<accession>Q8WSW0</accession>
<accession>Q8WSW1</accession>
<evidence type="ECO:0000250" key="1">
    <source>
        <dbReference type="UniProtKB" id="Q9NEW6"/>
    </source>
</evidence>
<evidence type="ECO:0000255" key="2"/>
<evidence type="ECO:0000255" key="3">
    <source>
        <dbReference type="PROSITE-ProRule" id="PRU00176"/>
    </source>
</evidence>
<evidence type="ECO:0000256" key="4">
    <source>
        <dbReference type="SAM" id="MobiDB-lite"/>
    </source>
</evidence>
<evidence type="ECO:0000269" key="5">
    <source>
    </source>
</evidence>
<evidence type="ECO:0000269" key="6">
    <source>
    </source>
</evidence>
<evidence type="ECO:0000303" key="7">
    <source>
    </source>
</evidence>
<evidence type="ECO:0000305" key="8"/>
<dbReference type="EMBL" id="FO080768">
    <property type="protein sequence ID" value="CCD66574.1"/>
    <property type="molecule type" value="Genomic_DNA"/>
</dbReference>
<dbReference type="PIR" id="T34145">
    <property type="entry name" value="T34145"/>
</dbReference>
<dbReference type="RefSeq" id="NP_741446.1">
    <property type="nucleotide sequence ID" value="NM_171383.6"/>
</dbReference>
<dbReference type="SMR" id="Q18409"/>
<dbReference type="BioGRID" id="42684">
    <property type="interactions" value="19"/>
</dbReference>
<dbReference type="DIP" id="DIP-27100N"/>
<dbReference type="FunCoup" id="Q18409">
    <property type="interactions" value="499"/>
</dbReference>
<dbReference type="IntAct" id="Q18409">
    <property type="interactions" value="3"/>
</dbReference>
<dbReference type="STRING" id="6239.C33H5.12a.1"/>
<dbReference type="iPTMnet" id="Q18409"/>
<dbReference type="PaxDb" id="6239-C33H5.12a"/>
<dbReference type="PeptideAtlas" id="Q18409"/>
<dbReference type="EnsemblMetazoa" id="C33H5.12a.1">
    <property type="protein sequence ID" value="C33H5.12a.1"/>
    <property type="gene ID" value="WBGene00004703"/>
</dbReference>
<dbReference type="GeneID" id="177566"/>
<dbReference type="KEGG" id="cel:CELE_C33H5.12"/>
<dbReference type="UCSC" id="C33H5.12a.1">
    <property type="organism name" value="c. elegans"/>
</dbReference>
<dbReference type="AGR" id="WB:WBGene00004703"/>
<dbReference type="CTD" id="177566"/>
<dbReference type="WormBase" id="C33H5.12a">
    <property type="protein sequence ID" value="CE04155"/>
    <property type="gene ID" value="WBGene00004703"/>
    <property type="gene designation" value="rsp-6"/>
</dbReference>
<dbReference type="eggNOG" id="KOG0107">
    <property type="taxonomic scope" value="Eukaryota"/>
</dbReference>
<dbReference type="GeneTree" id="ENSGT00940000165794"/>
<dbReference type="HOGENOM" id="CLU_012062_20_5_1"/>
<dbReference type="InParanoid" id="Q18409"/>
<dbReference type="OMA" id="HGPLNCK"/>
<dbReference type="OrthoDB" id="5970at2759"/>
<dbReference type="Reactome" id="R-CEL-159236">
    <property type="pathway name" value="Transport of Mature mRNA derived from an Intron-Containing Transcript"/>
</dbReference>
<dbReference type="Reactome" id="R-CEL-72163">
    <property type="pathway name" value="mRNA Splicing - Major Pathway"/>
</dbReference>
<dbReference type="Reactome" id="R-CEL-72165">
    <property type="pathway name" value="mRNA Splicing - Minor Pathway"/>
</dbReference>
<dbReference type="Reactome" id="R-CEL-72187">
    <property type="pathway name" value="mRNA 3'-end processing"/>
</dbReference>
<dbReference type="Reactome" id="R-CEL-72203">
    <property type="pathway name" value="Processing of Capped Intron-Containing Pre-mRNA"/>
</dbReference>
<dbReference type="Reactome" id="R-CEL-73856">
    <property type="pathway name" value="RNA Polymerase II Transcription Termination"/>
</dbReference>
<dbReference type="PRO" id="PR:Q18409"/>
<dbReference type="Proteomes" id="UP000001940">
    <property type="component" value="Chromosome IV"/>
</dbReference>
<dbReference type="Bgee" id="WBGene00004703">
    <property type="expression patterns" value="Expressed in pharyngeal muscle cell (C elegans) and 4 other cell types or tissues"/>
</dbReference>
<dbReference type="GO" id="GO:0016607">
    <property type="term" value="C:nuclear speck"/>
    <property type="evidence" value="ECO:0000318"/>
    <property type="project" value="GO_Central"/>
</dbReference>
<dbReference type="GO" id="GO:0005634">
    <property type="term" value="C:nucleus"/>
    <property type="evidence" value="ECO:0000314"/>
    <property type="project" value="UniProtKB"/>
</dbReference>
<dbReference type="GO" id="GO:0003729">
    <property type="term" value="F:mRNA binding"/>
    <property type="evidence" value="ECO:0000318"/>
    <property type="project" value="GO_Central"/>
</dbReference>
<dbReference type="GO" id="GO:0003723">
    <property type="term" value="F:RNA binding"/>
    <property type="evidence" value="ECO:0000250"/>
    <property type="project" value="WormBase"/>
</dbReference>
<dbReference type="GO" id="GO:0030154">
    <property type="term" value="P:cell differentiation"/>
    <property type="evidence" value="ECO:0007669"/>
    <property type="project" value="UniProtKB-KW"/>
</dbReference>
<dbReference type="GO" id="GO:0008406">
    <property type="term" value="P:gonad development"/>
    <property type="evidence" value="ECO:0000316"/>
    <property type="project" value="UniProtKB"/>
</dbReference>
<dbReference type="GO" id="GO:0045292">
    <property type="term" value="P:mRNA cis splicing, via spliceosome"/>
    <property type="evidence" value="ECO:0000318"/>
    <property type="project" value="GO_Central"/>
</dbReference>
<dbReference type="GO" id="GO:0000398">
    <property type="term" value="P:mRNA splicing, via spliceosome"/>
    <property type="evidence" value="ECO:0000250"/>
    <property type="project" value="WormBase"/>
</dbReference>
<dbReference type="GO" id="GO:0031554">
    <property type="term" value="P:regulation of termination of DNA-templated transcription"/>
    <property type="evidence" value="ECO:0000316"/>
    <property type="project" value="WormBase"/>
</dbReference>
<dbReference type="GO" id="GO:0008380">
    <property type="term" value="P:RNA splicing"/>
    <property type="evidence" value="ECO:0000303"/>
    <property type="project" value="UniProtKB"/>
</dbReference>
<dbReference type="CDD" id="cd12373">
    <property type="entry name" value="RRM_SRSF3_like"/>
    <property type="match status" value="1"/>
</dbReference>
<dbReference type="FunFam" id="3.30.70.330:FF:001083">
    <property type="entry name" value="Probable splicing factor, arginine/serine-rich 6"/>
    <property type="match status" value="1"/>
</dbReference>
<dbReference type="Gene3D" id="3.30.70.330">
    <property type="match status" value="1"/>
</dbReference>
<dbReference type="InterPro" id="IPR012677">
    <property type="entry name" value="Nucleotide-bd_a/b_plait_sf"/>
</dbReference>
<dbReference type="InterPro" id="IPR035979">
    <property type="entry name" value="RBD_domain_sf"/>
</dbReference>
<dbReference type="InterPro" id="IPR000504">
    <property type="entry name" value="RRM_dom"/>
</dbReference>
<dbReference type="InterPro" id="IPR050907">
    <property type="entry name" value="SRSF"/>
</dbReference>
<dbReference type="PANTHER" id="PTHR23147">
    <property type="entry name" value="SERINE/ARGININE RICH SPLICING FACTOR"/>
    <property type="match status" value="1"/>
</dbReference>
<dbReference type="Pfam" id="PF00076">
    <property type="entry name" value="RRM_1"/>
    <property type="match status" value="1"/>
</dbReference>
<dbReference type="SMART" id="SM00360">
    <property type="entry name" value="RRM"/>
    <property type="match status" value="1"/>
</dbReference>
<dbReference type="SUPFAM" id="SSF54928">
    <property type="entry name" value="RNA-binding domain, RBD"/>
    <property type="match status" value="1"/>
</dbReference>
<dbReference type="PROSITE" id="PS50102">
    <property type="entry name" value="RRM"/>
    <property type="match status" value="1"/>
</dbReference>
<proteinExistence type="inferred from homology"/>
<keyword id="KW-0217">Developmental protein</keyword>
<keyword id="KW-0221">Differentiation</keyword>
<keyword id="KW-0507">mRNA processing</keyword>
<keyword id="KW-0508">mRNA splicing</keyword>
<keyword id="KW-0539">Nucleus</keyword>
<keyword id="KW-0597">Phosphoprotein</keyword>
<keyword id="KW-1185">Reference proteome</keyword>
<keyword id="KW-0694">RNA-binding</keyword>
<keyword id="KW-0726">Sexual differentiation</keyword>